<dbReference type="EMBL" id="AK026004">
    <property type="protein sequence ID" value="BAB15316.1"/>
    <property type="molecule type" value="mRNA"/>
</dbReference>
<dbReference type="EMBL" id="AK301874">
    <property type="protein sequence ID" value="BAH13572.1"/>
    <property type="molecule type" value="mRNA"/>
</dbReference>
<dbReference type="EMBL" id="AK302090">
    <property type="protein sequence ID" value="BAH13622.1"/>
    <property type="molecule type" value="mRNA"/>
</dbReference>
<dbReference type="EMBL" id="AL136373">
    <property type="status" value="NOT_ANNOTATED_CDS"/>
    <property type="molecule type" value="Genomic_DNA"/>
</dbReference>
<dbReference type="EMBL" id="AL593856">
    <property type="status" value="NOT_ANNOTATED_CDS"/>
    <property type="molecule type" value="Genomic_DNA"/>
</dbReference>
<dbReference type="EMBL" id="BC008498">
    <property type="protein sequence ID" value="AAH08498.1"/>
    <property type="molecule type" value="mRNA"/>
</dbReference>
<dbReference type="EMBL" id="BC018781">
    <property type="protein sequence ID" value="AAH18781.1"/>
    <property type="molecule type" value="mRNA"/>
</dbReference>
<dbReference type="EMBL" id="BC071731">
    <property type="protein sequence ID" value="AAH71731.1"/>
    <property type="molecule type" value="mRNA"/>
</dbReference>
<dbReference type="CCDS" id="CCDS57998.1">
    <molecule id="Q5TC12-3"/>
</dbReference>
<dbReference type="CCDS" id="CCDS90944.1">
    <molecule id="Q5TC12-1"/>
</dbReference>
<dbReference type="RefSeq" id="NP_001036011.2">
    <property type="nucleotide sequence ID" value="NM_001042546.2"/>
</dbReference>
<dbReference type="RefSeq" id="NP_001230657.1">
    <molecule id="Q5TC12-3"/>
    <property type="nucleotide sequence ID" value="NM_001243728.1"/>
</dbReference>
<dbReference type="RefSeq" id="NP_001243347.1">
    <molecule id="Q5TC12-2"/>
    <property type="nucleotide sequence ID" value="NM_001256418.1"/>
</dbReference>
<dbReference type="RefSeq" id="NP_001381494.1">
    <molecule id="Q5TC12-1"/>
    <property type="nucleotide sequence ID" value="NM_001394565.1"/>
</dbReference>
<dbReference type="RefSeq" id="NP_073582.3">
    <property type="nucleotide sequence ID" value="NM_022745.4"/>
</dbReference>
<dbReference type="SMR" id="Q5TC12"/>
<dbReference type="BioGRID" id="122270">
    <property type="interactions" value="132"/>
</dbReference>
<dbReference type="FunCoup" id="Q5TC12">
    <property type="interactions" value="1744"/>
</dbReference>
<dbReference type="IntAct" id="Q5TC12">
    <property type="interactions" value="40"/>
</dbReference>
<dbReference type="MINT" id="Q5TC12"/>
<dbReference type="STRING" id="9606.ENSP00000460964"/>
<dbReference type="GlyGen" id="Q5TC12">
    <property type="glycosylation" value="1 site, 1 O-linked glycan (1 site)"/>
</dbReference>
<dbReference type="iPTMnet" id="Q5TC12"/>
<dbReference type="PhosphoSitePlus" id="Q5TC12"/>
<dbReference type="SwissPalm" id="Q5TC12"/>
<dbReference type="BioMuta" id="ATPAF1"/>
<dbReference type="DMDM" id="170652901"/>
<dbReference type="jPOST" id="Q5TC12"/>
<dbReference type="MassIVE" id="Q5TC12"/>
<dbReference type="PaxDb" id="9606-ENSP00000460964"/>
<dbReference type="PeptideAtlas" id="Q5TC12"/>
<dbReference type="ProteomicsDB" id="64936">
    <molecule id="Q5TC12-1"/>
</dbReference>
<dbReference type="ProteomicsDB" id="6856"/>
<dbReference type="ProteomicsDB" id="6874"/>
<dbReference type="Pumba" id="Q5TC12"/>
<dbReference type="Antibodypedia" id="32819">
    <property type="antibodies" value="87 antibodies from 18 providers"/>
</dbReference>
<dbReference type="DNASU" id="64756"/>
<dbReference type="Ensembl" id="ENST00000532925.5">
    <molecule id="Q5TC12-3"/>
    <property type="protein sequence ID" value="ENSP00000435732.1"/>
    <property type="gene ID" value="ENSG00000123472.13"/>
</dbReference>
<dbReference type="Ensembl" id="ENST00000574428.6">
    <molecule id="Q5TC12-1"/>
    <property type="protein sequence ID" value="ENSP00000459167.2"/>
    <property type="gene ID" value="ENSG00000123472.13"/>
</dbReference>
<dbReference type="GeneID" id="64756"/>
<dbReference type="KEGG" id="hsa:64756"/>
<dbReference type="MANE-Select" id="ENST00000574428.6">
    <property type="protein sequence ID" value="ENSP00000459167.2"/>
    <property type="RefSeq nucleotide sequence ID" value="NM_001394565.1"/>
    <property type="RefSeq protein sequence ID" value="NP_001381494.1"/>
</dbReference>
<dbReference type="UCSC" id="uc009vyk.4">
    <molecule id="Q5TC12-1"/>
    <property type="organism name" value="human"/>
</dbReference>
<dbReference type="AGR" id="HGNC:18803"/>
<dbReference type="CTD" id="64756"/>
<dbReference type="DisGeNET" id="64756"/>
<dbReference type="GeneCards" id="ATPAF1"/>
<dbReference type="HGNC" id="HGNC:18803">
    <property type="gene designation" value="ATPAF1"/>
</dbReference>
<dbReference type="HPA" id="ENSG00000123472">
    <property type="expression patterns" value="Tissue enhanced (tongue)"/>
</dbReference>
<dbReference type="MalaCards" id="ATPAF1"/>
<dbReference type="MIM" id="608917">
    <property type="type" value="gene"/>
</dbReference>
<dbReference type="neXtProt" id="NX_Q5TC12"/>
<dbReference type="OpenTargets" id="ENSG00000123472"/>
<dbReference type="PharmGKB" id="PA38687"/>
<dbReference type="VEuPathDB" id="HostDB:ENSG00000123472"/>
<dbReference type="eggNOG" id="KOG3281">
    <property type="taxonomic scope" value="Eukaryota"/>
</dbReference>
<dbReference type="GeneTree" id="ENSGT00390000012765"/>
<dbReference type="HOGENOM" id="CLU_1485271_0_0_1"/>
<dbReference type="InParanoid" id="Q5TC12"/>
<dbReference type="OrthoDB" id="16535at2759"/>
<dbReference type="PAN-GO" id="Q5TC12">
    <property type="GO annotations" value="2 GO annotations based on evolutionary models"/>
</dbReference>
<dbReference type="PhylomeDB" id="Q5TC12"/>
<dbReference type="TreeFam" id="TF325166"/>
<dbReference type="BioCyc" id="MetaCyc:ENSG00000123472-MONOMER"/>
<dbReference type="PathwayCommons" id="Q5TC12"/>
<dbReference type="SignaLink" id="Q5TC12"/>
<dbReference type="BioGRID-ORCS" id="64756">
    <property type="hits" value="21 hits in 1162 CRISPR screens"/>
</dbReference>
<dbReference type="ChiTaRS" id="ATPAF1">
    <property type="organism name" value="human"/>
</dbReference>
<dbReference type="GeneWiki" id="ATPAF1"/>
<dbReference type="GenomeRNAi" id="64756"/>
<dbReference type="Pharos" id="Q5TC12">
    <property type="development level" value="Tbio"/>
</dbReference>
<dbReference type="PRO" id="PR:Q5TC12"/>
<dbReference type="Proteomes" id="UP000005640">
    <property type="component" value="Chromosome 1"/>
</dbReference>
<dbReference type="RNAct" id="Q5TC12">
    <property type="molecule type" value="protein"/>
</dbReference>
<dbReference type="Bgee" id="ENSG00000123472">
    <property type="expression patterns" value="Expressed in left ventricle myocardium and 188 other cell types or tissues"/>
</dbReference>
<dbReference type="ExpressionAtlas" id="Q5TC12">
    <property type="expression patterns" value="baseline and differential"/>
</dbReference>
<dbReference type="GO" id="GO:0005743">
    <property type="term" value="C:mitochondrial inner membrane"/>
    <property type="evidence" value="ECO:0000250"/>
    <property type="project" value="UniProtKB"/>
</dbReference>
<dbReference type="GO" id="GO:0005739">
    <property type="term" value="C:mitochondrion"/>
    <property type="evidence" value="ECO:0006056"/>
    <property type="project" value="FlyBase"/>
</dbReference>
<dbReference type="GO" id="GO:0140777">
    <property type="term" value="F:protein-containing complex stabilizing activity"/>
    <property type="evidence" value="ECO:0000250"/>
    <property type="project" value="UniProtKB"/>
</dbReference>
<dbReference type="GO" id="GO:0033615">
    <property type="term" value="P:mitochondrial proton-transporting ATP synthase complex assembly"/>
    <property type="evidence" value="ECO:0000250"/>
    <property type="project" value="UniProtKB"/>
</dbReference>
<dbReference type="InterPro" id="IPR010591">
    <property type="entry name" value="ATP11"/>
</dbReference>
<dbReference type="PANTHER" id="PTHR13126:SF0">
    <property type="entry name" value="ATP SYNTHASE MITOCHONDRIAL F1 COMPLEX ASSEMBLY FACTOR 1"/>
    <property type="match status" value="1"/>
</dbReference>
<dbReference type="PANTHER" id="PTHR13126">
    <property type="entry name" value="CHAPERONE ATP11"/>
    <property type="match status" value="1"/>
</dbReference>
<dbReference type="Pfam" id="PF06644">
    <property type="entry name" value="ATP11"/>
    <property type="match status" value="1"/>
</dbReference>
<accession>Q5TC12</accession>
<accession>B1AQW7</accession>
<accession>B7Z7D6</accession>
<accession>B7Z7I6</accession>
<accession>Q9H6E3</accession>
<name>ATPF1_HUMAN</name>
<sequence length="328" mass="36437">MAAVVVAAAGGAGPAVLQVAGLYRGLCAVRSRALGLGLVSPAQLRVFPVRPGSGRPEGGADSSGVGAEAELQANPFYDRYRDKIQLLRRSDPAAFESRLEKRSEFRKQPVGHSRQGDFIKCVEQKTDALGKQSVNRGFTKDKTLSSIFNIEMVKEKTAEEIKQIWQQYFAAKDTVYAVIPAEKFDLIWNRAQSCPTFLCALPRREGYEFFVGQWTGTELHFTALINIQTRGEAAASQLILYHYPELKEEKGIVLMTAEMDSTFLNVAEAQCIANQVQLFYATDRKETYGLVETFNLRPNEFKYMSVIAELEQSGLGAELKCAQNQNKT</sequence>
<organism>
    <name type="scientific">Homo sapiens</name>
    <name type="common">Human</name>
    <dbReference type="NCBI Taxonomy" id="9606"/>
    <lineage>
        <taxon>Eukaryota</taxon>
        <taxon>Metazoa</taxon>
        <taxon>Chordata</taxon>
        <taxon>Craniata</taxon>
        <taxon>Vertebrata</taxon>
        <taxon>Euteleostomi</taxon>
        <taxon>Mammalia</taxon>
        <taxon>Eutheria</taxon>
        <taxon>Euarchontoglires</taxon>
        <taxon>Primates</taxon>
        <taxon>Haplorrhini</taxon>
        <taxon>Catarrhini</taxon>
        <taxon>Hominidae</taxon>
        <taxon>Homo</taxon>
    </lineage>
</organism>
<keyword id="KW-0025">Alternative splicing</keyword>
<keyword id="KW-0472">Membrane</keyword>
<keyword id="KW-0496">Mitochondrion</keyword>
<keyword id="KW-0999">Mitochondrion inner membrane</keyword>
<keyword id="KW-1267">Proteomics identification</keyword>
<keyword id="KW-1185">Reference proteome</keyword>
<keyword id="KW-0809">Transit peptide</keyword>
<feature type="transit peptide" description="Mitochondrion" evidence="2">
    <location>
        <begin position="1"/>
        <end position="57"/>
    </location>
</feature>
<feature type="chain" id="PRO_0000318915" description="ATP synthase mitochondrial F1 complex assembly factor 1">
    <location>
        <begin position="58"/>
        <end position="328"/>
    </location>
</feature>
<feature type="splice variant" id="VSP_045437" description="In isoform 2." evidence="8">
    <location>
        <begin position="1"/>
        <end position="151"/>
    </location>
</feature>
<feature type="splice variant" id="VSP_045438" description="In isoform 3." evidence="8">
    <original>MAAVVVAAAGGAGPAVLQVAGLYRGLCAVRSRALGLGLVSPAQLRVFPVRPGSGRPEGGADSSGVGAEAELQANPFYDRYRDKIQLLRR</original>
    <variation>M</variation>
    <location>
        <begin position="1"/>
        <end position="89"/>
    </location>
</feature>
<feature type="sequence variant" id="VAR_038906" description="In dbSNP:rs11211337." evidence="5 6">
    <original>S</original>
    <variation>G</variation>
    <location>
        <position position="62"/>
    </location>
</feature>
<gene>
    <name evidence="11" type="primary">ATPAF1</name>
    <name evidence="7" type="synonym">ATP11</name>
</gene>
<comment type="function">
    <text evidence="1">Has a complex stabilizing activity in the assembly of the mitochondrial F1-F0 complex.</text>
</comment>
<comment type="subunit">
    <text evidence="3">Interacts with ATP5F1B; involved in the assembly of the F1 component of the mitochondrial ATP synthase (ATPase).</text>
</comment>
<comment type="interaction">
    <interactant intactId="EBI-1166891">
        <id>Q5TC12</id>
    </interactant>
    <interactant intactId="EBI-356231">
        <id>P06576</id>
        <label>ATP5F1B</label>
    </interactant>
    <organismsDiffer>false</organismsDiffer>
    <experiments>3</experiments>
</comment>
<comment type="subcellular location">
    <subcellularLocation>
        <location evidence="1">Mitochondrion inner membrane</location>
        <topology evidence="1">Peripheral membrane protein</topology>
    </subcellularLocation>
</comment>
<comment type="alternative products">
    <event type="alternative splicing"/>
    <isoform>
        <id>Q5TC12-1</id>
        <name>1</name>
        <sequence type="displayed"/>
    </isoform>
    <isoform>
        <id>Q5TC12-2</id>
        <name>2</name>
        <sequence type="described" ref="VSP_045437"/>
    </isoform>
    <isoform>
        <id>Q5TC12-3</id>
        <name>3</name>
        <sequence type="described" ref="VSP_045438"/>
    </isoform>
</comment>
<comment type="tissue specificity">
    <text evidence="4">Weakly expressed in muscle.</text>
</comment>
<comment type="similarity">
    <text evidence="9">Belongs to the ATP11 family.</text>
</comment>
<evidence type="ECO:0000250" key="1">
    <source>
        <dbReference type="UniProtKB" id="Q811I0"/>
    </source>
</evidence>
<evidence type="ECO:0000255" key="2"/>
<evidence type="ECO:0000269" key="3">
    <source>
    </source>
</evidence>
<evidence type="ECO:0000269" key="4">
    <source>
    </source>
</evidence>
<evidence type="ECO:0000269" key="5">
    <source>
    </source>
</evidence>
<evidence type="ECO:0000269" key="6">
    <source>
    </source>
</evidence>
<evidence type="ECO:0000303" key="7">
    <source>
    </source>
</evidence>
<evidence type="ECO:0000303" key="8">
    <source>
    </source>
</evidence>
<evidence type="ECO:0000305" key="9"/>
<evidence type="ECO:0000305" key="10">
    <source>
    </source>
</evidence>
<evidence type="ECO:0000312" key="11">
    <source>
        <dbReference type="HGNC" id="HGNC:18803"/>
    </source>
</evidence>
<proteinExistence type="evidence at protein level"/>
<protein>
    <recommendedName>
        <fullName evidence="10">ATP synthase mitochondrial F1 complex assembly factor 1</fullName>
    </recommendedName>
    <alternativeName>
        <fullName evidence="10">ATP11 homolog</fullName>
    </alternativeName>
</protein>
<reference key="1">
    <citation type="journal article" date="2004" name="Nat. Genet.">
        <title>Complete sequencing and characterization of 21,243 full-length human cDNAs.</title>
        <authorList>
            <person name="Ota T."/>
            <person name="Suzuki Y."/>
            <person name="Nishikawa T."/>
            <person name="Otsuki T."/>
            <person name="Sugiyama T."/>
            <person name="Irie R."/>
            <person name="Wakamatsu A."/>
            <person name="Hayashi K."/>
            <person name="Sato H."/>
            <person name="Nagai K."/>
            <person name="Kimura K."/>
            <person name="Makita H."/>
            <person name="Sekine M."/>
            <person name="Obayashi M."/>
            <person name="Nishi T."/>
            <person name="Shibahara T."/>
            <person name="Tanaka T."/>
            <person name="Ishii S."/>
            <person name="Yamamoto J."/>
            <person name="Saito K."/>
            <person name="Kawai Y."/>
            <person name="Isono Y."/>
            <person name="Nakamura Y."/>
            <person name="Nagahari K."/>
            <person name="Murakami K."/>
            <person name="Yasuda T."/>
            <person name="Iwayanagi T."/>
            <person name="Wagatsuma M."/>
            <person name="Shiratori A."/>
            <person name="Sudo H."/>
            <person name="Hosoiri T."/>
            <person name="Kaku Y."/>
            <person name="Kodaira H."/>
            <person name="Kondo H."/>
            <person name="Sugawara M."/>
            <person name="Takahashi M."/>
            <person name="Kanda K."/>
            <person name="Yokoi T."/>
            <person name="Furuya T."/>
            <person name="Kikkawa E."/>
            <person name="Omura Y."/>
            <person name="Abe K."/>
            <person name="Kamihara K."/>
            <person name="Katsuta N."/>
            <person name="Sato K."/>
            <person name="Tanikawa M."/>
            <person name="Yamazaki M."/>
            <person name="Ninomiya K."/>
            <person name="Ishibashi T."/>
            <person name="Yamashita H."/>
            <person name="Murakawa K."/>
            <person name="Fujimori K."/>
            <person name="Tanai H."/>
            <person name="Kimata M."/>
            <person name="Watanabe M."/>
            <person name="Hiraoka S."/>
            <person name="Chiba Y."/>
            <person name="Ishida S."/>
            <person name="Ono Y."/>
            <person name="Takiguchi S."/>
            <person name="Watanabe S."/>
            <person name="Yosida M."/>
            <person name="Hotuta T."/>
            <person name="Kusano J."/>
            <person name="Kanehori K."/>
            <person name="Takahashi-Fujii A."/>
            <person name="Hara H."/>
            <person name="Tanase T.-O."/>
            <person name="Nomura Y."/>
            <person name="Togiya S."/>
            <person name="Komai F."/>
            <person name="Hara R."/>
            <person name="Takeuchi K."/>
            <person name="Arita M."/>
            <person name="Imose N."/>
            <person name="Musashino K."/>
            <person name="Yuuki H."/>
            <person name="Oshima A."/>
            <person name="Sasaki N."/>
            <person name="Aotsuka S."/>
            <person name="Yoshikawa Y."/>
            <person name="Matsunawa H."/>
            <person name="Ichihara T."/>
            <person name="Shiohata N."/>
            <person name="Sano S."/>
            <person name="Moriya S."/>
            <person name="Momiyama H."/>
            <person name="Satoh N."/>
            <person name="Takami S."/>
            <person name="Terashima Y."/>
            <person name="Suzuki O."/>
            <person name="Nakagawa S."/>
            <person name="Senoh A."/>
            <person name="Mizoguchi H."/>
            <person name="Goto Y."/>
            <person name="Shimizu F."/>
            <person name="Wakebe H."/>
            <person name="Hishigaki H."/>
            <person name="Watanabe T."/>
            <person name="Sugiyama A."/>
            <person name="Takemoto M."/>
            <person name="Kawakami B."/>
            <person name="Yamazaki M."/>
            <person name="Watanabe K."/>
            <person name="Kumagai A."/>
            <person name="Itakura S."/>
            <person name="Fukuzumi Y."/>
            <person name="Fujimori Y."/>
            <person name="Komiyama M."/>
            <person name="Tashiro H."/>
            <person name="Tanigami A."/>
            <person name="Fujiwara T."/>
            <person name="Ono T."/>
            <person name="Yamada K."/>
            <person name="Fujii Y."/>
            <person name="Ozaki K."/>
            <person name="Hirao M."/>
            <person name="Ohmori Y."/>
            <person name="Kawabata A."/>
            <person name="Hikiji T."/>
            <person name="Kobatake N."/>
            <person name="Inagaki H."/>
            <person name="Ikema Y."/>
            <person name="Okamoto S."/>
            <person name="Okitani R."/>
            <person name="Kawakami T."/>
            <person name="Noguchi S."/>
            <person name="Itoh T."/>
            <person name="Shigeta K."/>
            <person name="Senba T."/>
            <person name="Matsumura K."/>
            <person name="Nakajima Y."/>
            <person name="Mizuno T."/>
            <person name="Morinaga M."/>
            <person name="Sasaki M."/>
            <person name="Togashi T."/>
            <person name="Oyama M."/>
            <person name="Hata H."/>
            <person name="Watanabe M."/>
            <person name="Komatsu T."/>
            <person name="Mizushima-Sugano J."/>
            <person name="Satoh T."/>
            <person name="Shirai Y."/>
            <person name="Takahashi Y."/>
            <person name="Nakagawa K."/>
            <person name="Okumura K."/>
            <person name="Nagase T."/>
            <person name="Nomura N."/>
            <person name="Kikuchi H."/>
            <person name="Masuho Y."/>
            <person name="Yamashita R."/>
            <person name="Nakai K."/>
            <person name="Yada T."/>
            <person name="Nakamura Y."/>
            <person name="Ohara O."/>
            <person name="Isogai T."/>
            <person name="Sugano S."/>
        </authorList>
    </citation>
    <scope>NUCLEOTIDE SEQUENCE [LARGE SCALE MRNA] (ISOFORMS 1; 2 AND 3)</scope>
    <scope>VARIANT GLY-62</scope>
    <source>
        <tissue>Testis</tissue>
    </source>
</reference>
<reference key="2">
    <citation type="journal article" date="2006" name="Nature">
        <title>The DNA sequence and biological annotation of human chromosome 1.</title>
        <authorList>
            <person name="Gregory S.G."/>
            <person name="Barlow K.F."/>
            <person name="McLay K.E."/>
            <person name="Kaul R."/>
            <person name="Swarbreck D."/>
            <person name="Dunham A."/>
            <person name="Scott C.E."/>
            <person name="Howe K.L."/>
            <person name="Woodfine K."/>
            <person name="Spencer C.C.A."/>
            <person name="Jones M.C."/>
            <person name="Gillson C."/>
            <person name="Searle S."/>
            <person name="Zhou Y."/>
            <person name="Kokocinski F."/>
            <person name="McDonald L."/>
            <person name="Evans R."/>
            <person name="Phillips K."/>
            <person name="Atkinson A."/>
            <person name="Cooper R."/>
            <person name="Jones C."/>
            <person name="Hall R.E."/>
            <person name="Andrews T.D."/>
            <person name="Lloyd C."/>
            <person name="Ainscough R."/>
            <person name="Almeida J.P."/>
            <person name="Ambrose K.D."/>
            <person name="Anderson F."/>
            <person name="Andrew R.W."/>
            <person name="Ashwell R.I.S."/>
            <person name="Aubin K."/>
            <person name="Babbage A.K."/>
            <person name="Bagguley C.L."/>
            <person name="Bailey J."/>
            <person name="Beasley H."/>
            <person name="Bethel G."/>
            <person name="Bird C.P."/>
            <person name="Bray-Allen S."/>
            <person name="Brown J.Y."/>
            <person name="Brown A.J."/>
            <person name="Buckley D."/>
            <person name="Burton J."/>
            <person name="Bye J."/>
            <person name="Carder C."/>
            <person name="Chapman J.C."/>
            <person name="Clark S.Y."/>
            <person name="Clarke G."/>
            <person name="Clee C."/>
            <person name="Cobley V."/>
            <person name="Collier R.E."/>
            <person name="Corby N."/>
            <person name="Coville G.J."/>
            <person name="Davies J."/>
            <person name="Deadman R."/>
            <person name="Dunn M."/>
            <person name="Earthrowl M."/>
            <person name="Ellington A.G."/>
            <person name="Errington H."/>
            <person name="Frankish A."/>
            <person name="Frankland J."/>
            <person name="French L."/>
            <person name="Garner P."/>
            <person name="Garnett J."/>
            <person name="Gay L."/>
            <person name="Ghori M.R.J."/>
            <person name="Gibson R."/>
            <person name="Gilby L.M."/>
            <person name="Gillett W."/>
            <person name="Glithero R.J."/>
            <person name="Grafham D.V."/>
            <person name="Griffiths C."/>
            <person name="Griffiths-Jones S."/>
            <person name="Grocock R."/>
            <person name="Hammond S."/>
            <person name="Harrison E.S.I."/>
            <person name="Hart E."/>
            <person name="Haugen E."/>
            <person name="Heath P.D."/>
            <person name="Holmes S."/>
            <person name="Holt K."/>
            <person name="Howden P.J."/>
            <person name="Hunt A.R."/>
            <person name="Hunt S.E."/>
            <person name="Hunter G."/>
            <person name="Isherwood J."/>
            <person name="James R."/>
            <person name="Johnson C."/>
            <person name="Johnson D."/>
            <person name="Joy A."/>
            <person name="Kay M."/>
            <person name="Kershaw J.K."/>
            <person name="Kibukawa M."/>
            <person name="Kimberley A.M."/>
            <person name="King A."/>
            <person name="Knights A.J."/>
            <person name="Lad H."/>
            <person name="Laird G."/>
            <person name="Lawlor S."/>
            <person name="Leongamornlert D.A."/>
            <person name="Lloyd D.M."/>
            <person name="Loveland J."/>
            <person name="Lovell J."/>
            <person name="Lush M.J."/>
            <person name="Lyne R."/>
            <person name="Martin S."/>
            <person name="Mashreghi-Mohammadi M."/>
            <person name="Matthews L."/>
            <person name="Matthews N.S.W."/>
            <person name="McLaren S."/>
            <person name="Milne S."/>
            <person name="Mistry S."/>
            <person name="Moore M.J.F."/>
            <person name="Nickerson T."/>
            <person name="O'Dell C.N."/>
            <person name="Oliver K."/>
            <person name="Palmeiri A."/>
            <person name="Palmer S.A."/>
            <person name="Parker A."/>
            <person name="Patel D."/>
            <person name="Pearce A.V."/>
            <person name="Peck A.I."/>
            <person name="Pelan S."/>
            <person name="Phelps K."/>
            <person name="Phillimore B.J."/>
            <person name="Plumb R."/>
            <person name="Rajan J."/>
            <person name="Raymond C."/>
            <person name="Rouse G."/>
            <person name="Saenphimmachak C."/>
            <person name="Sehra H.K."/>
            <person name="Sheridan E."/>
            <person name="Shownkeen R."/>
            <person name="Sims S."/>
            <person name="Skuce C.D."/>
            <person name="Smith M."/>
            <person name="Steward C."/>
            <person name="Subramanian S."/>
            <person name="Sycamore N."/>
            <person name="Tracey A."/>
            <person name="Tromans A."/>
            <person name="Van Helmond Z."/>
            <person name="Wall M."/>
            <person name="Wallis J.M."/>
            <person name="White S."/>
            <person name="Whitehead S.L."/>
            <person name="Wilkinson J.E."/>
            <person name="Willey D.L."/>
            <person name="Williams H."/>
            <person name="Wilming L."/>
            <person name="Wray P.W."/>
            <person name="Wu Z."/>
            <person name="Coulson A."/>
            <person name="Vaudin M."/>
            <person name="Sulston J.E."/>
            <person name="Durbin R.M."/>
            <person name="Hubbard T."/>
            <person name="Wooster R."/>
            <person name="Dunham I."/>
            <person name="Carter N.P."/>
            <person name="McVean G."/>
            <person name="Ross M.T."/>
            <person name="Harrow J."/>
            <person name="Olson M.V."/>
            <person name="Beck S."/>
            <person name="Rogers J."/>
            <person name="Bentley D.R."/>
        </authorList>
    </citation>
    <scope>NUCLEOTIDE SEQUENCE [LARGE SCALE GENOMIC DNA]</scope>
</reference>
<reference key="3">
    <citation type="journal article" date="2004" name="Genome Res.">
        <title>The status, quality, and expansion of the NIH full-length cDNA project: the Mammalian Gene Collection (MGC).</title>
        <authorList>
            <consortium name="The MGC Project Team"/>
        </authorList>
    </citation>
    <scope>NUCLEOTIDE SEQUENCE [LARGE SCALE MRNA] (ISOFORM 1)</scope>
    <scope>VARIANT GLY-62</scope>
    <source>
        <tissue>Blood</tissue>
        <tissue>Brain</tissue>
        <tissue>Skin</tissue>
    </source>
</reference>
<reference key="4">
    <citation type="journal article" date="2001" name="J. Biol. Chem.">
        <title>Atp11p and Atp12p are assembly factors for the F(1)-ATPase in human mitochondria.</title>
        <authorList>
            <person name="Wang Z.-G."/>
            <person name="White P.S."/>
            <person name="Ackerman S.H."/>
        </authorList>
    </citation>
    <scope>PARTIAL NUCLEOTIDE SEQUENCE [MRNA]</scope>
    <scope>INTERACTION WITH ATP5F1B</scope>
    <source>
        <tissue>Fetal liver</tissue>
    </source>
</reference>
<reference key="5">
    <citation type="journal article" date="2003" name="FEBS Lett.">
        <title>Differential expression of ATPAF1 and ATPAF2 genes encoding F(1)-ATPase assembly proteins in mouse tissues.</title>
        <authorList>
            <person name="Pickova A."/>
            <person name="Paul J."/>
            <person name="Petruzzella V."/>
            <person name="Houstek J."/>
        </authorList>
    </citation>
    <scope>TISSUE SPECIFICITY</scope>
</reference>
<reference key="6">
    <citation type="journal article" date="2011" name="BMC Syst. Biol.">
        <title>Initial characterization of the human central proteome.</title>
        <authorList>
            <person name="Burkard T.R."/>
            <person name="Planyavsky M."/>
            <person name="Kaupe I."/>
            <person name="Breitwieser F.P."/>
            <person name="Buerckstuemmer T."/>
            <person name="Bennett K.L."/>
            <person name="Superti-Furga G."/>
            <person name="Colinge J."/>
        </authorList>
    </citation>
    <scope>IDENTIFICATION BY MASS SPECTROMETRY [LARGE SCALE ANALYSIS]</scope>
</reference>